<comment type="interaction">
    <interactant intactId="EBI-2836238">
        <id>Q96F05</id>
    </interactant>
    <interactant intactId="EBI-6942903">
        <id>Q96BA8</id>
        <label>CREB3L1</label>
    </interactant>
    <organismsDiffer>false</organismsDiffer>
    <experiments>3</experiments>
</comment>
<comment type="interaction">
    <interactant intactId="EBI-2836238">
        <id>Q96F05</id>
    </interactant>
    <interactant intactId="EBI-18304435">
        <id>Q5JX71</id>
        <label>FAM209A</label>
    </interactant>
    <organismsDiffer>false</organismsDiffer>
    <experiments>3</experiments>
</comment>
<comment type="interaction">
    <interactant intactId="EBI-2836238">
        <id>Q96F05</id>
    </interactant>
    <interactant intactId="EBI-2833872">
        <id>O15552</id>
        <label>FFAR2</label>
    </interactant>
    <organismsDiffer>false</organismsDiffer>
    <experiments>3</experiments>
</comment>
<comment type="interaction">
    <interactant intactId="EBI-2836238">
        <id>Q96F05</id>
    </interactant>
    <interactant intactId="EBI-724754">
        <id>O14880</id>
        <label>MGST3</label>
    </interactant>
    <organismsDiffer>false</organismsDiffer>
    <experiments>3</experiments>
</comment>
<comment type="interaction">
    <interactant intactId="EBI-2836238">
        <id>Q96F05</id>
    </interactant>
    <interactant intactId="EBI-18159983">
        <id>Q3KNW5</id>
        <label>SLC10A6</label>
    </interactant>
    <organismsDiffer>false</organismsDiffer>
    <experiments>3</experiments>
</comment>
<comment type="interaction">
    <interactant intactId="EBI-2836238">
        <id>Q96F05</id>
    </interactant>
    <interactant intactId="EBI-17280858">
        <id>Q8WWF3</id>
        <label>SSMEM1</label>
    </interactant>
    <organismsDiffer>false</organismsDiffer>
    <experiments>3</experiments>
</comment>
<comment type="interaction">
    <interactant intactId="EBI-2836238">
        <id>Q96F05</id>
    </interactant>
    <interactant intactId="EBI-11742770">
        <id>Q96HE8</id>
        <label>TMEM80</label>
    </interactant>
    <organismsDiffer>false</organismsDiffer>
    <experiments>3</experiments>
</comment>
<comment type="subcellular location">
    <subcellularLocation>
        <location evidence="7">Cell membrane</location>
        <topology evidence="7">Single-pass type I membrane protein</topology>
    </subcellularLocation>
    <subcellularLocation>
        <location evidence="7">Golgi apparatus</location>
        <location evidence="7">trans-Golgi network membrane</location>
        <topology evidence="7">Single-pass type I membrane protein</topology>
    </subcellularLocation>
    <text>Cycles to the plasma membrane via endosomes in a pH sensitive manner. Associated with Rab6-positive vesicles.</text>
</comment>
<comment type="tissue specificity">
    <text evidence="3">Highest expression in heart, placenta, liver, pancreas and colon. Also detected in brain, lung, skeletal muscle, kidney, spleen, prostate, testis, ovary and small intestine. Lowest expression in thymus and leukocytes.</text>
</comment>
<name>CK024_HUMAN</name>
<proteinExistence type="evidence at protein level"/>
<dbReference type="EMBL" id="AF264781">
    <property type="protein sequence ID" value="AAG36936.1"/>
    <property type="molecule type" value="mRNA"/>
</dbReference>
<dbReference type="EMBL" id="AY358754">
    <property type="protein sequence ID" value="AAQ89114.1"/>
    <property type="molecule type" value="mRNA"/>
</dbReference>
<dbReference type="EMBL" id="AF370372">
    <property type="protein sequence ID" value="AAQ15208.1"/>
    <property type="molecule type" value="mRNA"/>
</dbReference>
<dbReference type="EMBL" id="BC011765">
    <property type="protein sequence ID" value="AAH11765.1"/>
    <property type="molecule type" value="mRNA"/>
</dbReference>
<dbReference type="CCDS" id="CCDS8180.1"/>
<dbReference type="RefSeq" id="NP_001287842.1">
    <property type="nucleotide sequence ID" value="NM_001300913.1"/>
</dbReference>
<dbReference type="RefSeq" id="NP_071733.1">
    <property type="nucleotide sequence ID" value="NM_022338.4"/>
</dbReference>
<dbReference type="RefSeq" id="XP_005274110.1">
    <property type="nucleotide sequence ID" value="XM_005274053.5"/>
</dbReference>
<dbReference type="RefSeq" id="XP_054225111.1">
    <property type="nucleotide sequence ID" value="XM_054369136.1"/>
</dbReference>
<dbReference type="BioGRID" id="119808">
    <property type="interactions" value="19"/>
</dbReference>
<dbReference type="FunCoup" id="Q96F05">
    <property type="interactions" value="537"/>
</dbReference>
<dbReference type="IntAct" id="Q96F05">
    <property type="interactions" value="15"/>
</dbReference>
<dbReference type="STRING" id="9606.ENSP00000307264"/>
<dbReference type="GlyCosmos" id="Q96F05">
    <property type="glycosylation" value="3 sites, 1 glycan"/>
</dbReference>
<dbReference type="GlyGen" id="Q96F05">
    <property type="glycosylation" value="22 sites, 4 N-linked glycans (3 sites), 3 O-linked glycans (14 sites)"/>
</dbReference>
<dbReference type="iPTMnet" id="Q96F05"/>
<dbReference type="PhosphoSitePlus" id="Q96F05"/>
<dbReference type="BioMuta" id="C11orf24"/>
<dbReference type="DMDM" id="143811376"/>
<dbReference type="MassIVE" id="Q96F05"/>
<dbReference type="PaxDb" id="9606-ENSP00000307264"/>
<dbReference type="PeptideAtlas" id="Q96F05"/>
<dbReference type="ProteomicsDB" id="76480"/>
<dbReference type="Antibodypedia" id="2629">
    <property type="antibodies" value="66 antibodies from 16 providers"/>
</dbReference>
<dbReference type="DNASU" id="53838"/>
<dbReference type="Ensembl" id="ENST00000304271.11">
    <property type="protein sequence ID" value="ENSP00000307264.6"/>
    <property type="gene ID" value="ENSG00000171067.11"/>
</dbReference>
<dbReference type="GeneID" id="53838"/>
<dbReference type="KEGG" id="hsa:53838"/>
<dbReference type="MANE-Select" id="ENST00000304271.11">
    <property type="protein sequence ID" value="ENSP00000307264.6"/>
    <property type="RefSeq nucleotide sequence ID" value="NM_022338.4"/>
    <property type="RefSeq protein sequence ID" value="NP_071733.1"/>
</dbReference>
<dbReference type="UCSC" id="uc001onr.5">
    <property type="organism name" value="human"/>
</dbReference>
<dbReference type="AGR" id="HGNC:1174"/>
<dbReference type="CTD" id="53838"/>
<dbReference type="DisGeNET" id="53838"/>
<dbReference type="GeneCards" id="C11orf24"/>
<dbReference type="HGNC" id="HGNC:1174">
    <property type="gene designation" value="C11orf24"/>
</dbReference>
<dbReference type="HPA" id="ENSG00000171067">
    <property type="expression patterns" value="Low tissue specificity"/>
</dbReference>
<dbReference type="MIM" id="610880">
    <property type="type" value="gene"/>
</dbReference>
<dbReference type="neXtProt" id="NX_Q96F05"/>
<dbReference type="OpenTargets" id="ENSG00000171067"/>
<dbReference type="PharmGKB" id="PA25488"/>
<dbReference type="VEuPathDB" id="HostDB:ENSG00000171067"/>
<dbReference type="eggNOG" id="ENOG502RZBP">
    <property type="taxonomic scope" value="Eukaryota"/>
</dbReference>
<dbReference type="GeneTree" id="ENSGT00940000153377"/>
<dbReference type="HOGENOM" id="CLU_056955_0_0_1"/>
<dbReference type="InParanoid" id="Q96F05"/>
<dbReference type="OMA" id="PEMEAMS"/>
<dbReference type="OrthoDB" id="10071013at2759"/>
<dbReference type="PAN-GO" id="Q96F05">
    <property type="GO annotations" value="1 GO annotation based on evolutionary models"/>
</dbReference>
<dbReference type="PhylomeDB" id="Q96F05"/>
<dbReference type="TreeFam" id="TF336966"/>
<dbReference type="PathwayCommons" id="Q96F05"/>
<dbReference type="SignaLink" id="Q96F05"/>
<dbReference type="BioGRID-ORCS" id="53838">
    <property type="hits" value="10 hits in 1147 CRISPR screens"/>
</dbReference>
<dbReference type="ChiTaRS" id="C11orf24">
    <property type="organism name" value="human"/>
</dbReference>
<dbReference type="GenomeRNAi" id="53838"/>
<dbReference type="Pharos" id="Q96F05">
    <property type="development level" value="Tdark"/>
</dbReference>
<dbReference type="PRO" id="PR:Q96F05"/>
<dbReference type="Proteomes" id="UP000005640">
    <property type="component" value="Chromosome 11"/>
</dbReference>
<dbReference type="RNAct" id="Q96F05">
    <property type="molecule type" value="protein"/>
</dbReference>
<dbReference type="Bgee" id="ENSG00000171067">
    <property type="expression patterns" value="Expressed in right lobe of liver and 191 other cell types or tissues"/>
</dbReference>
<dbReference type="ExpressionAtlas" id="Q96F05">
    <property type="expression patterns" value="baseline and differential"/>
</dbReference>
<dbReference type="GO" id="GO:0005794">
    <property type="term" value="C:Golgi apparatus"/>
    <property type="evidence" value="ECO:0000314"/>
    <property type="project" value="HPA"/>
</dbReference>
<dbReference type="GO" id="GO:0043231">
    <property type="term" value="C:intracellular membrane-bounded organelle"/>
    <property type="evidence" value="ECO:0000314"/>
    <property type="project" value="HPA"/>
</dbReference>
<dbReference type="GO" id="GO:0005654">
    <property type="term" value="C:nucleoplasm"/>
    <property type="evidence" value="ECO:0000314"/>
    <property type="project" value="HPA"/>
</dbReference>
<dbReference type="GO" id="GO:0005886">
    <property type="term" value="C:plasma membrane"/>
    <property type="evidence" value="ECO:0007669"/>
    <property type="project" value="UniProtKB-SubCell"/>
</dbReference>
<dbReference type="InterPro" id="IPR041056">
    <property type="entry name" value="DUF5585"/>
</dbReference>
<dbReference type="InterPro" id="IPR052660">
    <property type="entry name" value="Erythrocyte_Invasion_ImmMod"/>
</dbReference>
<dbReference type="PANTHER" id="PTHR16021:SF9">
    <property type="entry name" value="CHROMOSOME 11 OPEN READING FRAME 24"/>
    <property type="match status" value="1"/>
</dbReference>
<dbReference type="PANTHER" id="PTHR16021">
    <property type="entry name" value="MANSC DOMAIN CONTAINING PROTEIN 1"/>
    <property type="match status" value="1"/>
</dbReference>
<dbReference type="Pfam" id="PF17823">
    <property type="entry name" value="DUF5585"/>
    <property type="match status" value="1"/>
</dbReference>
<protein>
    <recommendedName>
        <fullName>Uncharacterized protein C11orf24</fullName>
    </recommendedName>
    <alternativeName>
        <fullName>Protein DM4E3</fullName>
    </alternativeName>
</protein>
<organism>
    <name type="scientific">Homo sapiens</name>
    <name type="common">Human</name>
    <dbReference type="NCBI Taxonomy" id="9606"/>
    <lineage>
        <taxon>Eukaryota</taxon>
        <taxon>Metazoa</taxon>
        <taxon>Chordata</taxon>
        <taxon>Craniata</taxon>
        <taxon>Vertebrata</taxon>
        <taxon>Euteleostomi</taxon>
        <taxon>Mammalia</taxon>
        <taxon>Eutheria</taxon>
        <taxon>Euarchontoglires</taxon>
        <taxon>Primates</taxon>
        <taxon>Haplorrhini</taxon>
        <taxon>Catarrhini</taxon>
        <taxon>Hominidae</taxon>
        <taxon>Homo</taxon>
    </lineage>
</organism>
<feature type="signal peptide" evidence="1">
    <location>
        <begin position="1"/>
        <end position="20"/>
    </location>
</feature>
<feature type="chain" id="PRO_0000251887" description="Uncharacterized protein C11orf24">
    <location>
        <begin position="21"/>
        <end position="449"/>
    </location>
</feature>
<feature type="topological domain" description="Extracellular" evidence="1">
    <location>
        <begin position="21"/>
        <end position="400"/>
    </location>
</feature>
<feature type="transmembrane region" description="Helical" evidence="1">
    <location>
        <begin position="401"/>
        <end position="421"/>
    </location>
</feature>
<feature type="topological domain" description="Cytoplasmic" evidence="1">
    <location>
        <begin position="422"/>
        <end position="449"/>
    </location>
</feature>
<feature type="region of interest" description="Disordered" evidence="2">
    <location>
        <begin position="72"/>
        <end position="101"/>
    </location>
</feature>
<feature type="region of interest" description="Disordered" evidence="2">
    <location>
        <begin position="154"/>
        <end position="187"/>
    </location>
</feature>
<feature type="region of interest" description="Disordered" evidence="2">
    <location>
        <begin position="215"/>
        <end position="381"/>
    </location>
</feature>
<feature type="compositionally biased region" description="Low complexity" evidence="2">
    <location>
        <begin position="154"/>
        <end position="184"/>
    </location>
</feature>
<feature type="compositionally biased region" description="Low complexity" evidence="2">
    <location>
        <begin position="215"/>
        <end position="234"/>
    </location>
</feature>
<feature type="compositionally biased region" description="Polar residues" evidence="2">
    <location>
        <begin position="255"/>
        <end position="279"/>
    </location>
</feature>
<feature type="compositionally biased region" description="Polar residues" evidence="2">
    <location>
        <begin position="352"/>
        <end position="367"/>
    </location>
</feature>
<feature type="glycosylation site" description="N-linked (GlcNAc...) asparagine" evidence="1">
    <location>
        <position position="49"/>
    </location>
</feature>
<feature type="sequence variant" id="VAR_027713" description="In dbSNP:rs3802746." evidence="4 5 6">
    <original>G</original>
    <variation>V</variation>
    <location>
        <position position="97"/>
    </location>
</feature>
<feature type="sequence variant" id="VAR_027714" description="In dbSNP:rs901827.">
    <original>A</original>
    <variation>T</variation>
    <location>
        <position position="150"/>
    </location>
</feature>
<reference key="1">
    <citation type="journal article" date="2001" name="Genomics">
        <title>The sequence and gene characterization of a 400-kb candidate region for IDDM4 on chromosome 11q13.</title>
        <authorList>
            <person name="Twells R.C.J."/>
            <person name="Metzker M.L."/>
            <person name="Brown S.D."/>
            <person name="Cox R."/>
            <person name="Garey C."/>
            <person name="Hammond H."/>
            <person name="Hey P.J."/>
            <person name="Levy E."/>
            <person name="Nakagawa Y."/>
            <person name="Philips M.S."/>
            <person name="Todd J.A."/>
            <person name="Hess J.F."/>
        </authorList>
    </citation>
    <scope>NUCLEOTIDE SEQUENCE [MRNA]</scope>
    <scope>TISSUE SPECIFICITY</scope>
</reference>
<reference key="2">
    <citation type="journal article" date="2003" name="Genome Res.">
        <title>The secreted protein discovery initiative (SPDI), a large-scale effort to identify novel human secreted and transmembrane proteins: a bioinformatics assessment.</title>
        <authorList>
            <person name="Clark H.F."/>
            <person name="Gurney A.L."/>
            <person name="Abaya E."/>
            <person name="Baker K."/>
            <person name="Baldwin D.T."/>
            <person name="Brush J."/>
            <person name="Chen J."/>
            <person name="Chow B."/>
            <person name="Chui C."/>
            <person name="Crowley C."/>
            <person name="Currell B."/>
            <person name="Deuel B."/>
            <person name="Dowd P."/>
            <person name="Eaton D."/>
            <person name="Foster J.S."/>
            <person name="Grimaldi C."/>
            <person name="Gu Q."/>
            <person name="Hass P.E."/>
            <person name="Heldens S."/>
            <person name="Huang A."/>
            <person name="Kim H.S."/>
            <person name="Klimowski L."/>
            <person name="Jin Y."/>
            <person name="Johnson S."/>
            <person name="Lee J."/>
            <person name="Lewis L."/>
            <person name="Liao D."/>
            <person name="Mark M.R."/>
            <person name="Robbie E."/>
            <person name="Sanchez C."/>
            <person name="Schoenfeld J."/>
            <person name="Seshagiri S."/>
            <person name="Simmons L."/>
            <person name="Singh J."/>
            <person name="Smith V."/>
            <person name="Stinson J."/>
            <person name="Vagts A."/>
            <person name="Vandlen R.L."/>
            <person name="Watanabe C."/>
            <person name="Wieand D."/>
            <person name="Woods K."/>
            <person name="Xie M.-H."/>
            <person name="Yansura D.G."/>
            <person name="Yi S."/>
            <person name="Yu G."/>
            <person name="Yuan J."/>
            <person name="Zhang M."/>
            <person name="Zhang Z."/>
            <person name="Goddard A.D."/>
            <person name="Wood W.I."/>
            <person name="Godowski P.J."/>
            <person name="Gray A.M."/>
        </authorList>
    </citation>
    <scope>NUCLEOTIDE SEQUENCE [LARGE SCALE MRNA]</scope>
    <scope>VARIANT VAL-97</scope>
</reference>
<reference key="3">
    <citation type="journal article" date="2004" name="Proc. Natl. Acad. Sci. U.S.A.">
        <title>Large-scale cDNA transfection screening for genes related to cancer development and progression.</title>
        <authorList>
            <person name="Wan D."/>
            <person name="Gong Y."/>
            <person name="Qin W."/>
            <person name="Zhang P."/>
            <person name="Li J."/>
            <person name="Wei L."/>
            <person name="Zhou X."/>
            <person name="Li H."/>
            <person name="Qiu X."/>
            <person name="Zhong F."/>
            <person name="He L."/>
            <person name="Yu J."/>
            <person name="Yao G."/>
            <person name="Jiang H."/>
            <person name="Qian L."/>
            <person name="Yu Y."/>
            <person name="Shu H."/>
            <person name="Chen X."/>
            <person name="Xu H."/>
            <person name="Guo M."/>
            <person name="Pan Z."/>
            <person name="Chen Y."/>
            <person name="Ge C."/>
            <person name="Yang S."/>
            <person name="Gu J."/>
        </authorList>
    </citation>
    <scope>NUCLEOTIDE SEQUENCE [LARGE SCALE MRNA]</scope>
    <scope>VARIANT VAL-97</scope>
</reference>
<reference key="4">
    <citation type="journal article" date="2004" name="Genome Res.">
        <title>The status, quality, and expansion of the NIH full-length cDNA project: the Mammalian Gene Collection (MGC).</title>
        <authorList>
            <consortium name="The MGC Project Team"/>
        </authorList>
    </citation>
    <scope>NUCLEOTIDE SEQUENCE [LARGE SCALE MRNA]</scope>
    <scope>VARIANT VAL-97</scope>
    <source>
        <tissue>Skin</tissue>
    </source>
</reference>
<reference key="5">
    <citation type="journal article" date="2013" name="J. Proteome Res.">
        <title>Toward a comprehensive characterization of a human cancer cell phosphoproteome.</title>
        <authorList>
            <person name="Zhou H."/>
            <person name="Di Palma S."/>
            <person name="Preisinger C."/>
            <person name="Peng M."/>
            <person name="Polat A.N."/>
            <person name="Heck A.J."/>
            <person name="Mohammed S."/>
        </authorList>
    </citation>
    <scope>IDENTIFICATION BY MASS SPECTROMETRY [LARGE SCALE ANALYSIS]</scope>
    <source>
        <tissue>Erythroleukemia</tissue>
    </source>
</reference>
<reference key="6">
    <citation type="journal article" date="2013" name="PLoS ONE">
        <title>C11ORF24 is a novel type I membrane protein that cycles between the Golgi apparatus and the plasma membrane in Rab6-positive vesicles.</title>
        <authorList>
            <person name="Fraisier V."/>
            <person name="Kasri A."/>
            <person name="Miserey-Lenkei S."/>
            <person name="Sibarita J.B."/>
            <person name="Nair D."/>
            <person name="Mayeux A."/>
            <person name="Bardin S."/>
            <person name="Toyoda Y."/>
            <person name="Poser I."/>
            <person name="Poznyakovskiy A."/>
            <person name="Goud B."/>
            <person name="Hyman A.A."/>
            <person name="Dimitrov A."/>
        </authorList>
    </citation>
    <scope>SUBCELLULAR LOCATION</scope>
</reference>
<accession>Q96F05</accession>
<accession>Q9H2K4</accession>
<sequence>MWTALVLIWIFSLSLSESHAASNDPRNFVPNKMWKGLVKRNASVETVDNKTSEDVTMAAASPVTLTKGTSAAHLNSMEVTTEDTSRTDVSEPATSGGAADGVTSIAPTAVASSTTAASITTAASSMTVASSAPTTAASSTTVASIAPTTAASSMTAASSTPMTLALPAPTSTSTGRTPSTTATGHPSLSTALAQVPKSSALPRTATLATLATRAQTVATTANTSSPMSTRPSPSKHMPSDTAASPVPPMRPQAQGPISQVSVDQPVVNTTNKSTPMPSNTTPEPAPTPTVVTTTKAQAREPTASPVPVPHTSPIPEMEAMSPTTQPSPMPYTQRAAGPGTSQAPEQVETEATPGTDSTGPTPRSSGGTKMPATDSCQPSTQGQYMVVTTEPLTQAVVDKTLLLVVLLLGVTLFITVLVLFALQAYESYKKKDYTQVDYLINGMYADSEM</sequence>
<evidence type="ECO:0000255" key="1"/>
<evidence type="ECO:0000256" key="2">
    <source>
        <dbReference type="SAM" id="MobiDB-lite"/>
    </source>
</evidence>
<evidence type="ECO:0000269" key="3">
    <source>
    </source>
</evidence>
<evidence type="ECO:0000269" key="4">
    <source>
    </source>
</evidence>
<evidence type="ECO:0000269" key="5">
    <source>
    </source>
</evidence>
<evidence type="ECO:0000269" key="6">
    <source>
    </source>
</evidence>
<evidence type="ECO:0000269" key="7">
    <source>
    </source>
</evidence>
<keyword id="KW-1003">Cell membrane</keyword>
<keyword id="KW-0325">Glycoprotein</keyword>
<keyword id="KW-0333">Golgi apparatus</keyword>
<keyword id="KW-0472">Membrane</keyword>
<keyword id="KW-1267">Proteomics identification</keyword>
<keyword id="KW-1185">Reference proteome</keyword>
<keyword id="KW-0732">Signal</keyword>
<keyword id="KW-0812">Transmembrane</keyword>
<keyword id="KW-1133">Transmembrane helix</keyword>
<gene>
    <name type="primary">C11orf24</name>
    <name type="ORF">FP2568</name>
    <name type="ORF">UNQ1872/PRO4315</name>
</gene>